<keyword id="KW-0025">Alternative splicing</keyword>
<keyword id="KW-0106">Calcium</keyword>
<keyword id="KW-0109">Calcium transport</keyword>
<keyword id="KW-0325">Glycoprotein</keyword>
<keyword id="KW-0406">Ion transport</keyword>
<keyword id="KW-0472">Membrane</keyword>
<keyword id="KW-1267">Proteomics identification</keyword>
<keyword id="KW-1185">Reference proteome</keyword>
<keyword id="KW-0677">Repeat</keyword>
<keyword id="KW-0732">Signal</keyword>
<keyword id="KW-0812">Transmembrane</keyword>
<keyword id="KW-1133">Transmembrane helix</keyword>
<keyword id="KW-0813">Transport</keyword>
<accession>Q5VU97</accession>
<accession>Q49AE9</accession>
<accession>Q658T4</accession>
<accession>Q7Z3P2</accession>
<accession>Q9H7W4</accession>
<accession>Q9H9W3</accession>
<accession>Q9HCJ9</accession>
<reference key="1">
    <citation type="journal article" date="2007" name="BMC Genomics">
        <title>The full-ORF clone resource of the German cDNA consortium.</title>
        <authorList>
            <person name="Bechtel S."/>
            <person name="Rosenfelder H."/>
            <person name="Duda A."/>
            <person name="Schmidt C.P."/>
            <person name="Ernst U."/>
            <person name="Wellenreuther R."/>
            <person name="Mehrle A."/>
            <person name="Schuster C."/>
            <person name="Bahr A."/>
            <person name="Bloecker H."/>
            <person name="Heubner D."/>
            <person name="Hoerlein A."/>
            <person name="Michel G."/>
            <person name="Wedler H."/>
            <person name="Koehrer K."/>
            <person name="Ottenwaelder B."/>
            <person name="Poustka A."/>
            <person name="Wiemann S."/>
            <person name="Schupp I."/>
        </authorList>
    </citation>
    <scope>NUCLEOTIDE SEQUENCE [LARGE SCALE MRNA] (ISOFORM 2)</scope>
    <scope>VARIANT THR-414</scope>
    <source>
        <tissue>Fetal kidney</tissue>
        <tissue>Stomach</tissue>
    </source>
</reference>
<reference key="2">
    <citation type="journal article" date="2006" name="Nature">
        <title>The DNA sequence and biological annotation of human chromosome 1.</title>
        <authorList>
            <person name="Gregory S.G."/>
            <person name="Barlow K.F."/>
            <person name="McLay K.E."/>
            <person name="Kaul R."/>
            <person name="Swarbreck D."/>
            <person name="Dunham A."/>
            <person name="Scott C.E."/>
            <person name="Howe K.L."/>
            <person name="Woodfine K."/>
            <person name="Spencer C.C.A."/>
            <person name="Jones M.C."/>
            <person name="Gillson C."/>
            <person name="Searle S."/>
            <person name="Zhou Y."/>
            <person name="Kokocinski F."/>
            <person name="McDonald L."/>
            <person name="Evans R."/>
            <person name="Phillips K."/>
            <person name="Atkinson A."/>
            <person name="Cooper R."/>
            <person name="Jones C."/>
            <person name="Hall R.E."/>
            <person name="Andrews T.D."/>
            <person name="Lloyd C."/>
            <person name="Ainscough R."/>
            <person name="Almeida J.P."/>
            <person name="Ambrose K.D."/>
            <person name="Anderson F."/>
            <person name="Andrew R.W."/>
            <person name="Ashwell R.I.S."/>
            <person name="Aubin K."/>
            <person name="Babbage A.K."/>
            <person name="Bagguley C.L."/>
            <person name="Bailey J."/>
            <person name="Beasley H."/>
            <person name="Bethel G."/>
            <person name="Bird C.P."/>
            <person name="Bray-Allen S."/>
            <person name="Brown J.Y."/>
            <person name="Brown A.J."/>
            <person name="Buckley D."/>
            <person name="Burton J."/>
            <person name="Bye J."/>
            <person name="Carder C."/>
            <person name="Chapman J.C."/>
            <person name="Clark S.Y."/>
            <person name="Clarke G."/>
            <person name="Clee C."/>
            <person name="Cobley V."/>
            <person name="Collier R.E."/>
            <person name="Corby N."/>
            <person name="Coville G.J."/>
            <person name="Davies J."/>
            <person name="Deadman R."/>
            <person name="Dunn M."/>
            <person name="Earthrowl M."/>
            <person name="Ellington A.G."/>
            <person name="Errington H."/>
            <person name="Frankish A."/>
            <person name="Frankland J."/>
            <person name="French L."/>
            <person name="Garner P."/>
            <person name="Garnett J."/>
            <person name="Gay L."/>
            <person name="Ghori M.R.J."/>
            <person name="Gibson R."/>
            <person name="Gilby L.M."/>
            <person name="Gillett W."/>
            <person name="Glithero R.J."/>
            <person name="Grafham D.V."/>
            <person name="Griffiths C."/>
            <person name="Griffiths-Jones S."/>
            <person name="Grocock R."/>
            <person name="Hammond S."/>
            <person name="Harrison E.S.I."/>
            <person name="Hart E."/>
            <person name="Haugen E."/>
            <person name="Heath P.D."/>
            <person name="Holmes S."/>
            <person name="Holt K."/>
            <person name="Howden P.J."/>
            <person name="Hunt A.R."/>
            <person name="Hunt S.E."/>
            <person name="Hunter G."/>
            <person name="Isherwood J."/>
            <person name="James R."/>
            <person name="Johnson C."/>
            <person name="Johnson D."/>
            <person name="Joy A."/>
            <person name="Kay M."/>
            <person name="Kershaw J.K."/>
            <person name="Kibukawa M."/>
            <person name="Kimberley A.M."/>
            <person name="King A."/>
            <person name="Knights A.J."/>
            <person name="Lad H."/>
            <person name="Laird G."/>
            <person name="Lawlor S."/>
            <person name="Leongamornlert D.A."/>
            <person name="Lloyd D.M."/>
            <person name="Loveland J."/>
            <person name="Lovell J."/>
            <person name="Lush M.J."/>
            <person name="Lyne R."/>
            <person name="Martin S."/>
            <person name="Mashreghi-Mohammadi M."/>
            <person name="Matthews L."/>
            <person name="Matthews N.S.W."/>
            <person name="McLaren S."/>
            <person name="Milne S."/>
            <person name="Mistry S."/>
            <person name="Moore M.J.F."/>
            <person name="Nickerson T."/>
            <person name="O'Dell C.N."/>
            <person name="Oliver K."/>
            <person name="Palmeiri A."/>
            <person name="Palmer S.A."/>
            <person name="Parker A."/>
            <person name="Patel D."/>
            <person name="Pearce A.V."/>
            <person name="Peck A.I."/>
            <person name="Pelan S."/>
            <person name="Phelps K."/>
            <person name="Phillimore B.J."/>
            <person name="Plumb R."/>
            <person name="Rajan J."/>
            <person name="Raymond C."/>
            <person name="Rouse G."/>
            <person name="Saenphimmachak C."/>
            <person name="Sehra H.K."/>
            <person name="Sheridan E."/>
            <person name="Shownkeen R."/>
            <person name="Sims S."/>
            <person name="Skuce C.D."/>
            <person name="Smith M."/>
            <person name="Steward C."/>
            <person name="Subramanian S."/>
            <person name="Sycamore N."/>
            <person name="Tracey A."/>
            <person name="Tromans A."/>
            <person name="Van Helmond Z."/>
            <person name="Wall M."/>
            <person name="Wallis J.M."/>
            <person name="White S."/>
            <person name="Whitehead S.L."/>
            <person name="Wilkinson J.E."/>
            <person name="Willey D.L."/>
            <person name="Williams H."/>
            <person name="Wilming L."/>
            <person name="Wray P.W."/>
            <person name="Wu Z."/>
            <person name="Coulson A."/>
            <person name="Vaudin M."/>
            <person name="Sulston J.E."/>
            <person name="Durbin R.M."/>
            <person name="Hubbard T."/>
            <person name="Wooster R."/>
            <person name="Dunham I."/>
            <person name="Carter N.P."/>
            <person name="McVean G."/>
            <person name="Ross M.T."/>
            <person name="Harrow J."/>
            <person name="Olson M.V."/>
            <person name="Beck S."/>
            <person name="Rogers J."/>
            <person name="Bentley D.R."/>
        </authorList>
    </citation>
    <scope>NUCLEOTIDE SEQUENCE [LARGE SCALE GENOMIC DNA]</scope>
</reference>
<reference key="3">
    <citation type="journal article" date="2004" name="Genome Res.">
        <title>The status, quality, and expansion of the NIH full-length cDNA project: the Mammalian Gene Collection (MGC).</title>
        <authorList>
            <consortium name="The MGC Project Team"/>
        </authorList>
    </citation>
    <scope>NUCLEOTIDE SEQUENCE [LARGE SCALE MRNA] (ISOFORM 2)</scope>
    <scope>VARIANT THR-414</scope>
    <source>
        <tissue>Testis</tissue>
    </source>
</reference>
<reference key="4">
    <citation type="journal article" date="2000" name="DNA Res.">
        <title>Prediction of the coding sequences of unidentified human genes. XVIII. The complete sequences of 100 new cDNA clones from brain which code for large proteins in vitro.</title>
        <authorList>
            <person name="Nagase T."/>
            <person name="Kikuno R."/>
            <person name="Nakayama M."/>
            <person name="Hirosawa M."/>
            <person name="Ohara O."/>
        </authorList>
    </citation>
    <scope>NUCLEOTIDE SEQUENCE [LARGE SCALE MRNA] OF 90-1274 (ISOFORM 1)</scope>
    <scope>VARIANT THR-414</scope>
    <source>
        <tissue>Brain</tissue>
    </source>
</reference>
<reference key="5">
    <citation type="journal article" date="2004" name="Nat. Genet.">
        <title>Complete sequencing and characterization of 21,243 full-length human cDNAs.</title>
        <authorList>
            <person name="Ota T."/>
            <person name="Suzuki Y."/>
            <person name="Nishikawa T."/>
            <person name="Otsuki T."/>
            <person name="Sugiyama T."/>
            <person name="Irie R."/>
            <person name="Wakamatsu A."/>
            <person name="Hayashi K."/>
            <person name="Sato H."/>
            <person name="Nagai K."/>
            <person name="Kimura K."/>
            <person name="Makita H."/>
            <person name="Sekine M."/>
            <person name="Obayashi M."/>
            <person name="Nishi T."/>
            <person name="Shibahara T."/>
            <person name="Tanaka T."/>
            <person name="Ishii S."/>
            <person name="Yamamoto J."/>
            <person name="Saito K."/>
            <person name="Kawai Y."/>
            <person name="Isono Y."/>
            <person name="Nakamura Y."/>
            <person name="Nagahari K."/>
            <person name="Murakami K."/>
            <person name="Yasuda T."/>
            <person name="Iwayanagi T."/>
            <person name="Wagatsuma M."/>
            <person name="Shiratori A."/>
            <person name="Sudo H."/>
            <person name="Hosoiri T."/>
            <person name="Kaku Y."/>
            <person name="Kodaira H."/>
            <person name="Kondo H."/>
            <person name="Sugawara M."/>
            <person name="Takahashi M."/>
            <person name="Kanda K."/>
            <person name="Yokoi T."/>
            <person name="Furuya T."/>
            <person name="Kikkawa E."/>
            <person name="Omura Y."/>
            <person name="Abe K."/>
            <person name="Kamihara K."/>
            <person name="Katsuta N."/>
            <person name="Sato K."/>
            <person name="Tanikawa M."/>
            <person name="Yamazaki M."/>
            <person name="Ninomiya K."/>
            <person name="Ishibashi T."/>
            <person name="Yamashita H."/>
            <person name="Murakawa K."/>
            <person name="Fujimori K."/>
            <person name="Tanai H."/>
            <person name="Kimata M."/>
            <person name="Watanabe M."/>
            <person name="Hiraoka S."/>
            <person name="Chiba Y."/>
            <person name="Ishida S."/>
            <person name="Ono Y."/>
            <person name="Takiguchi S."/>
            <person name="Watanabe S."/>
            <person name="Yosida M."/>
            <person name="Hotuta T."/>
            <person name="Kusano J."/>
            <person name="Kanehori K."/>
            <person name="Takahashi-Fujii A."/>
            <person name="Hara H."/>
            <person name="Tanase T.-O."/>
            <person name="Nomura Y."/>
            <person name="Togiya S."/>
            <person name="Komai F."/>
            <person name="Hara R."/>
            <person name="Takeuchi K."/>
            <person name="Arita M."/>
            <person name="Imose N."/>
            <person name="Musashino K."/>
            <person name="Yuuki H."/>
            <person name="Oshima A."/>
            <person name="Sasaki N."/>
            <person name="Aotsuka S."/>
            <person name="Yoshikawa Y."/>
            <person name="Matsunawa H."/>
            <person name="Ichihara T."/>
            <person name="Shiohata N."/>
            <person name="Sano S."/>
            <person name="Moriya S."/>
            <person name="Momiyama H."/>
            <person name="Satoh N."/>
            <person name="Takami S."/>
            <person name="Terashima Y."/>
            <person name="Suzuki O."/>
            <person name="Nakagawa S."/>
            <person name="Senoh A."/>
            <person name="Mizoguchi H."/>
            <person name="Goto Y."/>
            <person name="Shimizu F."/>
            <person name="Wakebe H."/>
            <person name="Hishigaki H."/>
            <person name="Watanabe T."/>
            <person name="Sugiyama A."/>
            <person name="Takemoto M."/>
            <person name="Kawakami B."/>
            <person name="Yamazaki M."/>
            <person name="Watanabe K."/>
            <person name="Kumagai A."/>
            <person name="Itakura S."/>
            <person name="Fukuzumi Y."/>
            <person name="Fujimori Y."/>
            <person name="Komiyama M."/>
            <person name="Tashiro H."/>
            <person name="Tanigami A."/>
            <person name="Fujiwara T."/>
            <person name="Ono T."/>
            <person name="Yamada K."/>
            <person name="Fujii Y."/>
            <person name="Ozaki K."/>
            <person name="Hirao M."/>
            <person name="Ohmori Y."/>
            <person name="Kawabata A."/>
            <person name="Hikiji T."/>
            <person name="Kobatake N."/>
            <person name="Inagaki H."/>
            <person name="Ikema Y."/>
            <person name="Okamoto S."/>
            <person name="Okitani R."/>
            <person name="Kawakami T."/>
            <person name="Noguchi S."/>
            <person name="Itoh T."/>
            <person name="Shigeta K."/>
            <person name="Senba T."/>
            <person name="Matsumura K."/>
            <person name="Nakajima Y."/>
            <person name="Mizuno T."/>
            <person name="Morinaga M."/>
            <person name="Sasaki M."/>
            <person name="Togashi T."/>
            <person name="Oyama M."/>
            <person name="Hata H."/>
            <person name="Watanabe M."/>
            <person name="Komatsu T."/>
            <person name="Mizushima-Sugano J."/>
            <person name="Satoh T."/>
            <person name="Shirai Y."/>
            <person name="Takahashi Y."/>
            <person name="Nakagawa K."/>
            <person name="Okumura K."/>
            <person name="Nagase T."/>
            <person name="Nomura N."/>
            <person name="Kikuchi H."/>
            <person name="Masuho Y."/>
            <person name="Yamashita R."/>
            <person name="Nakai K."/>
            <person name="Yada T."/>
            <person name="Nakamura Y."/>
            <person name="Ohara O."/>
            <person name="Isogai T."/>
            <person name="Sugano S."/>
        </authorList>
    </citation>
    <scope>NUCLEOTIDE SEQUENCE [LARGE SCALE MRNA] OF 542-1274</scope>
    <source>
        <tissue>Teratocarcinoma</tissue>
    </source>
</reference>
<feature type="signal peptide" evidence="2">
    <location>
        <begin position="1"/>
        <end position="35"/>
    </location>
</feature>
<feature type="chain" id="PRO_0000304661" description="VWFA and cache domain-containing protein 1">
    <location>
        <begin position="36"/>
        <end position="1274"/>
    </location>
</feature>
<feature type="topological domain" description="Extracellular" evidence="2">
    <location>
        <begin position="36"/>
        <end position="1095"/>
    </location>
</feature>
<feature type="transmembrane region" description="Helical" evidence="2">
    <location>
        <begin position="1096"/>
        <end position="1116"/>
    </location>
</feature>
<feature type="topological domain" description="Cytoplasmic" evidence="2">
    <location>
        <begin position="1117"/>
        <end position="1274"/>
    </location>
</feature>
<feature type="domain" description="VWFA" evidence="3">
    <location>
        <begin position="228"/>
        <end position="443"/>
    </location>
</feature>
<feature type="domain" description="Cache 1">
    <location>
        <begin position="453"/>
        <end position="532"/>
    </location>
</feature>
<feature type="domain" description="Cache 2">
    <location>
        <begin position="772"/>
        <end position="853"/>
    </location>
</feature>
<feature type="region of interest" description="Disordered" evidence="4">
    <location>
        <begin position="1179"/>
        <end position="1227"/>
    </location>
</feature>
<feature type="compositionally biased region" description="Polar residues" evidence="4">
    <location>
        <begin position="1196"/>
        <end position="1215"/>
    </location>
</feature>
<feature type="glycosylation site" description="N-linked (GlcNAc...) asparagine" evidence="2">
    <location>
        <position position="145"/>
    </location>
</feature>
<feature type="splice variant" id="VSP_028072" description="In isoform 2." evidence="8 9">
    <location>
        <begin position="1"/>
        <end position="296"/>
    </location>
</feature>
<feature type="sequence variant" id="VAR_035052" description="In dbSNP:rs6588100." evidence="5 6 7">
    <original>M</original>
    <variation>T</variation>
    <location>
        <position position="414"/>
    </location>
</feature>
<feature type="sequence conflict" description="In Ref. 1; CAD97793." evidence="10" ref="1">
    <original>Q</original>
    <variation>L</variation>
    <location>
        <position position="1000"/>
    </location>
</feature>
<evidence type="ECO:0000250" key="1"/>
<evidence type="ECO:0000255" key="2"/>
<evidence type="ECO:0000255" key="3">
    <source>
        <dbReference type="PROSITE-ProRule" id="PRU00219"/>
    </source>
</evidence>
<evidence type="ECO:0000256" key="4">
    <source>
        <dbReference type="SAM" id="MobiDB-lite"/>
    </source>
</evidence>
<evidence type="ECO:0000269" key="5">
    <source>
    </source>
</evidence>
<evidence type="ECO:0000269" key="6">
    <source>
    </source>
</evidence>
<evidence type="ECO:0000269" key="7">
    <source>
    </source>
</evidence>
<evidence type="ECO:0000303" key="8">
    <source>
    </source>
</evidence>
<evidence type="ECO:0000303" key="9">
    <source>
    </source>
</evidence>
<evidence type="ECO:0000305" key="10"/>
<gene>
    <name type="primary">CACHD1</name>
    <name type="synonym">KIAA1573</name>
    <name type="synonym">VWCD1</name>
</gene>
<protein>
    <recommendedName>
        <fullName>VWFA and cache domain-containing protein 1</fullName>
        <shortName>Cache domain-containing protein 1</shortName>
    </recommendedName>
</protein>
<proteinExistence type="evidence at protein level"/>
<sequence length="1274" mass="142290">MARQPEEEETAVARARRPPLWLLCLVACWLLGAGAEADFSILDEAQVLASQMRRLAAEELGVVTMQRIFNSFVYTEKISNGESEVQQLAKKIREKFNRYLDVVNRNKQVVEASYTAHLTSPLTAIQDCCTIPPSMMEFDGNFNTNVSRTISCDRLSTTVNSRAFNPGRDLNSVLADNLKSNPGIKWQYFSSEEGIFTVFPAHKFRCKGSYEHRSRPIYVSTVRPQSKHIVVILDHGASVTDTQLQIAKDAAQVILSAIDEHDKISVLTVADTVRTCSLDQCYKTFLSPATSETKRKMSTFVSSVKSSDSPTQHAVGFQKAFQLIRSTNNNTKFQANTDMVIIYLSAGITSKDSSEEDKKATLQVINEENSFLNNSVMILTYALMNDGVTGLKELAFLRDLAEQNSGKYGVPDRMALPVIKGSMMVLNQLSNLETTVGRFYTNLPNRMIDEAVFSLPFSDEMGDGLIMTVSKPCYFGNLLLGIVGVDVNLAYILEDVTYYQDSLASYTFLIDDKGYTLMHPSLTRPYLLSEPPLHTDIIHYENIPKFELVRQNILSLPLGSQIIAVPVNSSLSWHINKLRETGKEAYNVSYAWKMVQDTSFILCIVVIQPEIPVKQLKNLNTVPSSKLLYHRLDLLGQPSACLHFKQLATLESPTIMLSAGSFSSPYEHLSQPETKRMVEHYTAYLSDNTRLIANPGLKFSVRNEVMATSHVTDEWMTQMEMSSLNTYIVRRYIATPNGVLRIYPGSLMDKAFDPTRRQWYLHAVANPGLISLTGPYLDVGGAGYVVTISHTIHSSSTQLSSGHTVAVMGIDFTLRYFYKVLMDLLPVCNQDGGNKIRCFIMEDRGYLVAHPTLIDPKGHAPVEQQHITHKEPLVANDILNHPNFVKKNLCNSFSDRTVQRFYKFNTSLAGDLTNLVHGSHCSKYRLARIPGTNAFVGIVNETCDSLAFCACSMVDRLCLNCHRMEQNECECPCECPLEVNECTGNLTNAENRNPSCEVHQEPVTYTAIDPGLQDALHQCVNSRCSQRLESGDCFGVLDCEWCMVDSDGKTHLDKPYCAPQKECFGGIVGAKSPYVDDMGAIGDEVITLNMIKSAPVGPVAGGIMGCIMVLVLAVYAYRHQIHRRSHQHMSPLAAQEMSVRMSNLENDRDERDDDSHEDRGIISNTRFIAAVIERHAHSPERRRRYWGRSGTESDHGYSTMSPQEDSENPPCNNDPLSAGVDVGNHDEDLDLDTPPQTAALLSHKFHHYRSHHPTLHHSHHLQAAVTVHTVDAEC</sequence>
<comment type="function">
    <text evidence="1">May regulate voltage-dependent calcium channels.</text>
</comment>
<comment type="subcellular location">
    <subcellularLocation>
        <location evidence="10">Membrane</location>
        <topology evidence="10">Single-pass type I membrane protein</topology>
    </subcellularLocation>
</comment>
<comment type="alternative products">
    <event type="alternative splicing"/>
    <isoform>
        <id>Q5VU97-1</id>
        <name>1</name>
        <sequence type="displayed"/>
    </isoform>
    <isoform>
        <id>Q5VU97-2</id>
        <name>2</name>
        <sequence type="described" ref="VSP_028072"/>
    </isoform>
</comment>
<comment type="similarity">
    <text evidence="10">Belongs to the calcium channel subunit alpha-2/delta family.</text>
</comment>
<comment type="sequence caution" evidence="10">
    <conflict type="erroneous initiation">
        <sequence resource="EMBL-CDS" id="BAB14105"/>
    </conflict>
</comment>
<comment type="sequence caution" evidence="10">
    <conflict type="erroneous initiation">
        <sequence resource="EMBL-CDS" id="BAB14860"/>
    </conflict>
</comment>
<name>CAHD1_HUMAN</name>
<organism>
    <name type="scientific">Homo sapiens</name>
    <name type="common">Human</name>
    <dbReference type="NCBI Taxonomy" id="9606"/>
    <lineage>
        <taxon>Eukaryota</taxon>
        <taxon>Metazoa</taxon>
        <taxon>Chordata</taxon>
        <taxon>Craniata</taxon>
        <taxon>Vertebrata</taxon>
        <taxon>Euteleostomi</taxon>
        <taxon>Mammalia</taxon>
        <taxon>Eutheria</taxon>
        <taxon>Euarchontoglires</taxon>
        <taxon>Primates</taxon>
        <taxon>Haplorrhini</taxon>
        <taxon>Catarrhini</taxon>
        <taxon>Hominidae</taxon>
        <taxon>Homo</taxon>
    </lineage>
</organism>
<dbReference type="EMBL" id="AL833000">
    <property type="protein sequence ID" value="CAH56312.1"/>
    <property type="molecule type" value="mRNA"/>
</dbReference>
<dbReference type="EMBL" id="BX537603">
    <property type="protein sequence ID" value="CAD97793.1"/>
    <property type="molecule type" value="mRNA"/>
</dbReference>
<dbReference type="EMBL" id="AC099678">
    <property type="status" value="NOT_ANNOTATED_CDS"/>
    <property type="molecule type" value="Genomic_DNA"/>
</dbReference>
<dbReference type="EMBL" id="AL355515">
    <property type="status" value="NOT_ANNOTATED_CDS"/>
    <property type="molecule type" value="Genomic_DNA"/>
</dbReference>
<dbReference type="EMBL" id="AL590405">
    <property type="status" value="NOT_ANNOTATED_CDS"/>
    <property type="molecule type" value="Genomic_DNA"/>
</dbReference>
<dbReference type="EMBL" id="BC039301">
    <property type="protein sequence ID" value="AAH39301.1"/>
    <property type="molecule type" value="mRNA"/>
</dbReference>
<dbReference type="EMBL" id="AB046793">
    <property type="protein sequence ID" value="BAB13399.1"/>
    <property type="molecule type" value="mRNA"/>
</dbReference>
<dbReference type="EMBL" id="AK022571">
    <property type="protein sequence ID" value="BAB14105.1"/>
    <property type="status" value="ALT_INIT"/>
    <property type="molecule type" value="mRNA"/>
</dbReference>
<dbReference type="EMBL" id="AK024256">
    <property type="protein sequence ID" value="BAB14860.1"/>
    <property type="status" value="ALT_INIT"/>
    <property type="molecule type" value="mRNA"/>
</dbReference>
<dbReference type="CCDS" id="CCDS628.3">
    <molecule id="Q5VU97-1"/>
</dbReference>
<dbReference type="RefSeq" id="NP_001280203.1">
    <molecule id="Q5VU97-2"/>
    <property type="nucleotide sequence ID" value="NM_001293274.2"/>
</dbReference>
<dbReference type="RefSeq" id="NP_065976.3">
    <molecule id="Q5VU97-1"/>
    <property type="nucleotide sequence ID" value="NM_020925.4"/>
</dbReference>
<dbReference type="SMR" id="Q5VU97"/>
<dbReference type="BioGRID" id="121712">
    <property type="interactions" value="65"/>
</dbReference>
<dbReference type="FunCoup" id="Q5VU97">
    <property type="interactions" value="446"/>
</dbReference>
<dbReference type="IntAct" id="Q5VU97">
    <property type="interactions" value="31"/>
</dbReference>
<dbReference type="MINT" id="Q5VU97"/>
<dbReference type="STRING" id="9606.ENSP00000290039"/>
<dbReference type="TCDB" id="8.A.18.2.2">
    <property type="family name" value="the ca(2+) channel auxiliary subunit Alpha2Delta types 1-4 (cca-Alpha2Delta) family"/>
</dbReference>
<dbReference type="GlyConnect" id="1901">
    <property type="glycosylation" value="2 N-Linked glycans (1 site)"/>
</dbReference>
<dbReference type="GlyCosmos" id="Q5VU97">
    <property type="glycosylation" value="2 sites, 2 glycans"/>
</dbReference>
<dbReference type="GlyGen" id="Q5VU97">
    <property type="glycosylation" value="5 sites, 6 N-linked glycans (4 sites)"/>
</dbReference>
<dbReference type="iPTMnet" id="Q5VU97"/>
<dbReference type="PhosphoSitePlus" id="Q5VU97"/>
<dbReference type="BioMuta" id="CACHD1"/>
<dbReference type="DMDM" id="158563905"/>
<dbReference type="jPOST" id="Q5VU97"/>
<dbReference type="MassIVE" id="Q5VU97"/>
<dbReference type="PaxDb" id="9606-ENSP00000290039"/>
<dbReference type="PeptideAtlas" id="Q5VU97"/>
<dbReference type="ProteomicsDB" id="65401">
    <molecule id="Q5VU97-1"/>
</dbReference>
<dbReference type="ProteomicsDB" id="65402">
    <molecule id="Q5VU97-2"/>
</dbReference>
<dbReference type="Pumba" id="Q5VU97"/>
<dbReference type="Antibodypedia" id="2535">
    <property type="antibodies" value="39 antibodies from 14 providers"/>
</dbReference>
<dbReference type="DNASU" id="57685"/>
<dbReference type="Ensembl" id="ENST00000651257.2">
    <molecule id="Q5VU97-1"/>
    <property type="protein sequence ID" value="ENSP00000498498.1"/>
    <property type="gene ID" value="ENSG00000158966.16"/>
</dbReference>
<dbReference type="GeneID" id="57685"/>
<dbReference type="KEGG" id="hsa:57685"/>
<dbReference type="MANE-Select" id="ENST00000651257.2">
    <property type="protein sequence ID" value="ENSP00000498498.1"/>
    <property type="RefSeq nucleotide sequence ID" value="NM_020925.4"/>
    <property type="RefSeq protein sequence ID" value="NP_065976.3"/>
</dbReference>
<dbReference type="AGR" id="HGNC:29314"/>
<dbReference type="CTD" id="57685"/>
<dbReference type="DisGeNET" id="57685"/>
<dbReference type="GeneCards" id="CACHD1"/>
<dbReference type="HGNC" id="HGNC:29314">
    <property type="gene designation" value="CACHD1"/>
</dbReference>
<dbReference type="HPA" id="ENSG00000158966">
    <property type="expression patterns" value="Low tissue specificity"/>
</dbReference>
<dbReference type="MalaCards" id="CACHD1"/>
<dbReference type="MIM" id="620144">
    <property type="type" value="gene"/>
</dbReference>
<dbReference type="neXtProt" id="NX_Q5VU97"/>
<dbReference type="OpenTargets" id="ENSG00000158966"/>
<dbReference type="PharmGKB" id="PA142672211"/>
<dbReference type="VEuPathDB" id="HostDB:ENSG00000158966"/>
<dbReference type="eggNOG" id="KOG2353">
    <property type="taxonomic scope" value="Eukaryota"/>
</dbReference>
<dbReference type="GeneTree" id="ENSGT00940000157568"/>
<dbReference type="InParanoid" id="Q5VU97"/>
<dbReference type="OMA" id="NTHPYLS"/>
<dbReference type="OrthoDB" id="2150145at2759"/>
<dbReference type="PAN-GO" id="Q5VU97">
    <property type="GO annotations" value="2 GO annotations based on evolutionary models"/>
</dbReference>
<dbReference type="PhylomeDB" id="Q5VU97"/>
<dbReference type="TreeFam" id="TF315824"/>
<dbReference type="PathwayCommons" id="Q5VU97"/>
<dbReference type="SignaLink" id="Q5VU97"/>
<dbReference type="BioGRID-ORCS" id="57685">
    <property type="hits" value="8 hits in 1149 CRISPR screens"/>
</dbReference>
<dbReference type="ChiTaRS" id="CACHD1">
    <property type="organism name" value="human"/>
</dbReference>
<dbReference type="GenomeRNAi" id="57685"/>
<dbReference type="Pharos" id="Q5VU97">
    <property type="development level" value="Tdark"/>
</dbReference>
<dbReference type="PRO" id="PR:Q5VU97"/>
<dbReference type="Proteomes" id="UP000005640">
    <property type="component" value="Chromosome 1"/>
</dbReference>
<dbReference type="RNAct" id="Q5VU97">
    <property type="molecule type" value="protein"/>
</dbReference>
<dbReference type="Bgee" id="ENSG00000158966">
    <property type="expression patterns" value="Expressed in oviduct epithelium and 180 other cell types or tissues"/>
</dbReference>
<dbReference type="ExpressionAtlas" id="Q5VU97">
    <property type="expression patterns" value="baseline and differential"/>
</dbReference>
<dbReference type="GO" id="GO:0005891">
    <property type="term" value="C:voltage-gated calcium channel complex"/>
    <property type="evidence" value="ECO:0000318"/>
    <property type="project" value="GO_Central"/>
</dbReference>
<dbReference type="GO" id="GO:0005245">
    <property type="term" value="F:voltage-gated calcium channel activity"/>
    <property type="evidence" value="ECO:0000318"/>
    <property type="project" value="GO_Central"/>
</dbReference>
<dbReference type="FunFam" id="3.30.450.20:FF:000024">
    <property type="entry name" value="VWFA and cache domain-containing protein 1"/>
    <property type="match status" value="1"/>
</dbReference>
<dbReference type="FunFam" id="3.30.450.20:FF:000029">
    <property type="entry name" value="VWFA and cache domain-containing protein 1"/>
    <property type="match status" value="1"/>
</dbReference>
<dbReference type="FunFam" id="3.40.50.410:FF:000039">
    <property type="entry name" value="VWFA and cache domain-containing protein 1"/>
    <property type="match status" value="1"/>
</dbReference>
<dbReference type="Gene3D" id="3.30.450.20">
    <property type="entry name" value="PAS domain"/>
    <property type="match status" value="2"/>
</dbReference>
<dbReference type="Gene3D" id="3.40.50.410">
    <property type="entry name" value="von Willebrand factor, type A domain"/>
    <property type="match status" value="1"/>
</dbReference>
<dbReference type="InterPro" id="IPR051173">
    <property type="entry name" value="Ca_channel_alpha-2/delta"/>
</dbReference>
<dbReference type="InterPro" id="IPR029151">
    <property type="entry name" value="Sensor-like_sf"/>
</dbReference>
<dbReference type="InterPro" id="IPR002035">
    <property type="entry name" value="VWF_A"/>
</dbReference>
<dbReference type="InterPro" id="IPR036465">
    <property type="entry name" value="vWFA_dom_sf"/>
</dbReference>
<dbReference type="PANTHER" id="PTHR10166">
    <property type="entry name" value="VOLTAGE-DEPENDENT CALCIUM CHANNEL SUBUNIT ALPHA-2/DELTA-RELATED"/>
    <property type="match status" value="1"/>
</dbReference>
<dbReference type="PANTHER" id="PTHR10166:SF68">
    <property type="entry name" value="VWFA AND CACHE DOMAIN-CONTAINING PROTEIN 1"/>
    <property type="match status" value="1"/>
</dbReference>
<dbReference type="SUPFAM" id="SSF103190">
    <property type="entry name" value="Sensory domain-like"/>
    <property type="match status" value="1"/>
</dbReference>
<dbReference type="SUPFAM" id="SSF53300">
    <property type="entry name" value="vWA-like"/>
    <property type="match status" value="1"/>
</dbReference>
<dbReference type="PROSITE" id="PS50234">
    <property type="entry name" value="VWFA"/>
    <property type="match status" value="1"/>
</dbReference>